<feature type="chain" id="PRO_0000251602" description="Pleckstrin homology domain-containing family F member 2">
    <location>
        <begin position="1"/>
        <end position="249"/>
    </location>
</feature>
<feature type="domain" description="PH" evidence="3">
    <location>
        <begin position="35"/>
        <end position="131"/>
    </location>
</feature>
<feature type="zinc finger region" description="FYVE-type" evidence="2">
    <location>
        <begin position="152"/>
        <end position="212"/>
    </location>
</feature>
<feature type="region of interest" description="Disordered" evidence="4">
    <location>
        <begin position="219"/>
        <end position="249"/>
    </location>
</feature>
<feature type="compositionally biased region" description="Polar residues" evidence="4">
    <location>
        <begin position="219"/>
        <end position="232"/>
    </location>
</feature>
<feature type="compositionally biased region" description="Acidic residues" evidence="4">
    <location>
        <begin position="238"/>
        <end position="249"/>
    </location>
</feature>
<feature type="binding site" evidence="2">
    <location>
        <position position="158"/>
    </location>
    <ligand>
        <name>Zn(2+)</name>
        <dbReference type="ChEBI" id="CHEBI:29105"/>
        <label>1</label>
    </ligand>
</feature>
<feature type="binding site" evidence="2">
    <location>
        <position position="161"/>
    </location>
    <ligand>
        <name>Zn(2+)</name>
        <dbReference type="ChEBI" id="CHEBI:29105"/>
        <label>1</label>
    </ligand>
</feature>
<feature type="binding site" evidence="2">
    <location>
        <position position="175"/>
    </location>
    <ligand>
        <name>Zn(2+)</name>
        <dbReference type="ChEBI" id="CHEBI:29105"/>
        <label>2</label>
    </ligand>
</feature>
<feature type="binding site" evidence="2">
    <location>
        <position position="178"/>
    </location>
    <ligand>
        <name>Zn(2+)</name>
        <dbReference type="ChEBI" id="CHEBI:29105"/>
        <label>2</label>
    </ligand>
</feature>
<feature type="binding site" evidence="2">
    <location>
        <position position="183"/>
    </location>
    <ligand>
        <name>Zn(2+)</name>
        <dbReference type="ChEBI" id="CHEBI:29105"/>
        <label>1</label>
    </ligand>
</feature>
<feature type="binding site" evidence="2">
    <location>
        <position position="186"/>
    </location>
    <ligand>
        <name>Zn(2+)</name>
        <dbReference type="ChEBI" id="CHEBI:29105"/>
        <label>1</label>
    </ligand>
</feature>
<feature type="binding site" evidence="2">
    <location>
        <position position="204"/>
    </location>
    <ligand>
        <name>Zn(2+)</name>
        <dbReference type="ChEBI" id="CHEBI:29105"/>
        <label>2</label>
    </ligand>
</feature>
<feature type="binding site" evidence="2">
    <location>
        <position position="207"/>
    </location>
    <ligand>
        <name>Zn(2+)</name>
        <dbReference type="ChEBI" id="CHEBI:29105"/>
        <label>2</label>
    </ligand>
</feature>
<comment type="function">
    <text evidence="1">May play a role in early endosome fusion upstream of RAB5, hence regulating receptor trafficking and fluid-phase transport. Enhances cellular sensitivity to TNF-induced apoptosis.</text>
</comment>
<comment type="subcellular location">
    <subcellularLocation>
        <location evidence="1">Early endosome membrane</location>
        <topology evidence="1">Peripheral membrane protein</topology>
    </subcellularLocation>
    <subcellularLocation>
        <location evidence="1">Endoplasmic reticulum</location>
    </subcellularLocation>
    <text evidence="1">Colocalizes with EEA1 and RAB5 at endosomal membrane fusion hot spots. May translocate to the endoplasmic reticulum in the early phase of apoptosis.</text>
</comment>
<comment type="domain">
    <text evidence="1">The FYVE domain is important for binding to the endosomal membrane.</text>
</comment>
<dbReference type="EMBL" id="AJ719599">
    <property type="protein sequence ID" value="CAG31258.1"/>
    <property type="molecule type" value="mRNA"/>
</dbReference>
<dbReference type="RefSeq" id="NP_001026118.1">
    <property type="nucleotide sequence ID" value="NM_001030947.1"/>
</dbReference>
<dbReference type="SMR" id="Q5ZLY5"/>
<dbReference type="FunCoup" id="Q5ZLY5">
    <property type="interactions" value="459"/>
</dbReference>
<dbReference type="STRING" id="9031.ENSGALP00000048710"/>
<dbReference type="PaxDb" id="9031-ENSGALP00000025718"/>
<dbReference type="GeneID" id="420234"/>
<dbReference type="KEGG" id="gga:420234"/>
<dbReference type="CTD" id="79666"/>
<dbReference type="VEuPathDB" id="HostDB:geneid_420234"/>
<dbReference type="eggNOG" id="KOG1729">
    <property type="taxonomic scope" value="Eukaryota"/>
</dbReference>
<dbReference type="InParanoid" id="Q5ZLY5"/>
<dbReference type="OrthoDB" id="70570at2759"/>
<dbReference type="PhylomeDB" id="Q5ZLY5"/>
<dbReference type="PRO" id="PR:Q5ZLY5"/>
<dbReference type="Proteomes" id="UP000000539">
    <property type="component" value="Unassembled WGS sequence"/>
</dbReference>
<dbReference type="GO" id="GO:0005769">
    <property type="term" value="C:early endosome"/>
    <property type="evidence" value="ECO:0000318"/>
    <property type="project" value="GO_Central"/>
</dbReference>
<dbReference type="GO" id="GO:0031901">
    <property type="term" value="C:early endosome membrane"/>
    <property type="evidence" value="ECO:0007669"/>
    <property type="project" value="UniProtKB-SubCell"/>
</dbReference>
<dbReference type="GO" id="GO:0005783">
    <property type="term" value="C:endoplasmic reticulum"/>
    <property type="evidence" value="ECO:0007669"/>
    <property type="project" value="UniProtKB-SubCell"/>
</dbReference>
<dbReference type="GO" id="GO:0035091">
    <property type="term" value="F:phosphatidylinositol binding"/>
    <property type="evidence" value="ECO:0000318"/>
    <property type="project" value="GO_Central"/>
</dbReference>
<dbReference type="GO" id="GO:0008270">
    <property type="term" value="F:zinc ion binding"/>
    <property type="evidence" value="ECO:0007669"/>
    <property type="project" value="UniProtKB-KW"/>
</dbReference>
<dbReference type="GO" id="GO:0007032">
    <property type="term" value="P:endosome organization"/>
    <property type="evidence" value="ECO:0000318"/>
    <property type="project" value="GO_Central"/>
</dbReference>
<dbReference type="GO" id="GO:0008333">
    <property type="term" value="P:endosome to lysosome transport"/>
    <property type="evidence" value="ECO:0000318"/>
    <property type="project" value="GO_Central"/>
</dbReference>
<dbReference type="GO" id="GO:0015031">
    <property type="term" value="P:protein transport"/>
    <property type="evidence" value="ECO:0007669"/>
    <property type="project" value="UniProtKB-KW"/>
</dbReference>
<dbReference type="CDD" id="cd15755">
    <property type="entry name" value="FYVE_PKHF2"/>
    <property type="match status" value="1"/>
</dbReference>
<dbReference type="CDD" id="cd01218">
    <property type="entry name" value="PH_Phafin2-like"/>
    <property type="match status" value="1"/>
</dbReference>
<dbReference type="FunFam" id="2.30.29.30:FF:000167">
    <property type="entry name" value="Pleckstrin homology domain-containing family F member 2"/>
    <property type="match status" value="1"/>
</dbReference>
<dbReference type="FunFam" id="3.30.40.10:FF:000212">
    <property type="entry name" value="pleckstrin homology domain-containing family F member 2"/>
    <property type="match status" value="1"/>
</dbReference>
<dbReference type="Gene3D" id="2.30.29.30">
    <property type="entry name" value="Pleckstrin-homology domain (PH domain)/Phosphotyrosine-binding domain (PTB)"/>
    <property type="match status" value="1"/>
</dbReference>
<dbReference type="Gene3D" id="3.30.40.10">
    <property type="entry name" value="Zinc/RING finger domain, C3HC4 (zinc finger)"/>
    <property type="match status" value="1"/>
</dbReference>
<dbReference type="InterPro" id="IPR011993">
    <property type="entry name" value="PH-like_dom_sf"/>
</dbReference>
<dbReference type="InterPro" id="IPR001849">
    <property type="entry name" value="PH_domain"/>
</dbReference>
<dbReference type="InterPro" id="IPR051765">
    <property type="entry name" value="PH_domain-containing_F"/>
</dbReference>
<dbReference type="InterPro" id="IPR037871">
    <property type="entry name" value="PH_Phafin"/>
</dbReference>
<dbReference type="InterPro" id="IPR047966">
    <property type="entry name" value="PLEKHF2_FYVE"/>
</dbReference>
<dbReference type="InterPro" id="IPR000306">
    <property type="entry name" value="Znf_FYVE"/>
</dbReference>
<dbReference type="InterPro" id="IPR017455">
    <property type="entry name" value="Znf_FYVE-rel"/>
</dbReference>
<dbReference type="InterPro" id="IPR011011">
    <property type="entry name" value="Znf_FYVE_PHD"/>
</dbReference>
<dbReference type="InterPro" id="IPR013083">
    <property type="entry name" value="Znf_RING/FYVE/PHD"/>
</dbReference>
<dbReference type="PANTHER" id="PTHR46280:SF1">
    <property type="entry name" value="PLECKSTRIN HOMOLOGY DOMAIN-CONTAINING FAMILY F MEMBER 2"/>
    <property type="match status" value="1"/>
</dbReference>
<dbReference type="PANTHER" id="PTHR46280">
    <property type="entry name" value="PLECKSTRIN HOMOLOGY DOMAIN-CONTAINING FAMILY F MEMBER 2-RELATED"/>
    <property type="match status" value="1"/>
</dbReference>
<dbReference type="Pfam" id="PF01363">
    <property type="entry name" value="FYVE"/>
    <property type="match status" value="1"/>
</dbReference>
<dbReference type="Pfam" id="PF00169">
    <property type="entry name" value="PH"/>
    <property type="match status" value="1"/>
</dbReference>
<dbReference type="SMART" id="SM00064">
    <property type="entry name" value="FYVE"/>
    <property type="match status" value="1"/>
</dbReference>
<dbReference type="SMART" id="SM00233">
    <property type="entry name" value="PH"/>
    <property type="match status" value="1"/>
</dbReference>
<dbReference type="SUPFAM" id="SSF57903">
    <property type="entry name" value="FYVE/PHD zinc finger"/>
    <property type="match status" value="1"/>
</dbReference>
<dbReference type="SUPFAM" id="SSF50729">
    <property type="entry name" value="PH domain-like"/>
    <property type="match status" value="1"/>
</dbReference>
<dbReference type="PROSITE" id="PS50003">
    <property type="entry name" value="PH_DOMAIN"/>
    <property type="match status" value="1"/>
</dbReference>
<dbReference type="PROSITE" id="PS50178">
    <property type="entry name" value="ZF_FYVE"/>
    <property type="match status" value="1"/>
</dbReference>
<proteinExistence type="evidence at transcript level"/>
<sequence>MVDRLANSEANTRRISIVENCFGAAGQPLTIPGRVLIGEGVLTKLCRKKPKARQFFLFNDILVYGNIVIQKKKYNKQHIIPLENVTIDSIQDEGDLRNGWLIKTPTKSFAVYAATATEKSEWMNHINKCVSDLLSKSGKTPSNEHAAVWVPDSEATVCMRCQKAKFTPVNRRHHCRKCGFVVCGPCSEKRFLLPSQSSKPVRICDSCYDLLSTGEMTACQSTRSDSYSQSPKSSLNDASDDDDDEDSSD</sequence>
<keyword id="KW-0256">Endoplasmic reticulum</keyword>
<keyword id="KW-0967">Endosome</keyword>
<keyword id="KW-0472">Membrane</keyword>
<keyword id="KW-0479">Metal-binding</keyword>
<keyword id="KW-0653">Protein transport</keyword>
<keyword id="KW-1185">Reference proteome</keyword>
<keyword id="KW-0813">Transport</keyword>
<keyword id="KW-0862">Zinc</keyword>
<keyword id="KW-0863">Zinc-finger</keyword>
<accession>Q5ZLY5</accession>
<protein>
    <recommendedName>
        <fullName>Pleckstrin homology domain-containing family F member 2</fullName>
        <shortName>PH domain-containing family F member 2</shortName>
    </recommendedName>
</protein>
<gene>
    <name type="primary">PLEKHF2</name>
    <name type="ORF">RCJMB04_4g10</name>
</gene>
<name>PKHF2_CHICK</name>
<organism>
    <name type="scientific">Gallus gallus</name>
    <name type="common">Chicken</name>
    <dbReference type="NCBI Taxonomy" id="9031"/>
    <lineage>
        <taxon>Eukaryota</taxon>
        <taxon>Metazoa</taxon>
        <taxon>Chordata</taxon>
        <taxon>Craniata</taxon>
        <taxon>Vertebrata</taxon>
        <taxon>Euteleostomi</taxon>
        <taxon>Archelosauria</taxon>
        <taxon>Archosauria</taxon>
        <taxon>Dinosauria</taxon>
        <taxon>Saurischia</taxon>
        <taxon>Theropoda</taxon>
        <taxon>Coelurosauria</taxon>
        <taxon>Aves</taxon>
        <taxon>Neognathae</taxon>
        <taxon>Galloanserae</taxon>
        <taxon>Galliformes</taxon>
        <taxon>Phasianidae</taxon>
        <taxon>Phasianinae</taxon>
        <taxon>Gallus</taxon>
    </lineage>
</organism>
<reference key="1">
    <citation type="journal article" date="2005" name="Genome Biol.">
        <title>Full-length cDNAs from chicken bursal lymphocytes to facilitate gene function analysis.</title>
        <authorList>
            <person name="Caldwell R.B."/>
            <person name="Kierzek A.M."/>
            <person name="Arakawa H."/>
            <person name="Bezzubov Y."/>
            <person name="Zaim J."/>
            <person name="Fiedler P."/>
            <person name="Kutter S."/>
            <person name="Blagodatski A."/>
            <person name="Kostovska D."/>
            <person name="Koter M."/>
            <person name="Plachy J."/>
            <person name="Carninci P."/>
            <person name="Hayashizaki Y."/>
            <person name="Buerstedde J.-M."/>
        </authorList>
    </citation>
    <scope>NUCLEOTIDE SEQUENCE [LARGE SCALE MRNA]</scope>
    <source>
        <strain>CB</strain>
        <tissue>Bursa of Fabricius</tissue>
    </source>
</reference>
<evidence type="ECO:0000250" key="1"/>
<evidence type="ECO:0000255" key="2">
    <source>
        <dbReference type="PROSITE-ProRule" id="PRU00091"/>
    </source>
</evidence>
<evidence type="ECO:0000255" key="3">
    <source>
        <dbReference type="PROSITE-ProRule" id="PRU00145"/>
    </source>
</evidence>
<evidence type="ECO:0000256" key="4">
    <source>
        <dbReference type="SAM" id="MobiDB-lite"/>
    </source>
</evidence>